<dbReference type="EMBL" id="CP001129">
    <property type="protein sequence ID" value="ACG61438.1"/>
    <property type="molecule type" value="Genomic_DNA"/>
</dbReference>
<dbReference type="RefSeq" id="WP_012514731.1">
    <property type="nucleotide sequence ID" value="NC_011134.1"/>
</dbReference>
<dbReference type="SMR" id="B4U4Z9"/>
<dbReference type="KEGG" id="sez:Sez_0055"/>
<dbReference type="HOGENOM" id="CLU_122625_1_3_9"/>
<dbReference type="Proteomes" id="UP000001873">
    <property type="component" value="Chromosome"/>
</dbReference>
<dbReference type="GO" id="GO:1990904">
    <property type="term" value="C:ribonucleoprotein complex"/>
    <property type="evidence" value="ECO:0007669"/>
    <property type="project" value="UniProtKB-KW"/>
</dbReference>
<dbReference type="GO" id="GO:0005840">
    <property type="term" value="C:ribosome"/>
    <property type="evidence" value="ECO:0007669"/>
    <property type="project" value="UniProtKB-KW"/>
</dbReference>
<dbReference type="GO" id="GO:0003735">
    <property type="term" value="F:structural constituent of ribosome"/>
    <property type="evidence" value="ECO:0007669"/>
    <property type="project" value="InterPro"/>
</dbReference>
<dbReference type="GO" id="GO:0000049">
    <property type="term" value="F:tRNA binding"/>
    <property type="evidence" value="ECO:0007669"/>
    <property type="project" value="UniProtKB-UniRule"/>
</dbReference>
<dbReference type="GO" id="GO:0006412">
    <property type="term" value="P:translation"/>
    <property type="evidence" value="ECO:0007669"/>
    <property type="project" value="UniProtKB-UniRule"/>
</dbReference>
<dbReference type="FunFam" id="3.30.70.600:FF:000001">
    <property type="entry name" value="30S ribosomal protein S10"/>
    <property type="match status" value="1"/>
</dbReference>
<dbReference type="Gene3D" id="3.30.70.600">
    <property type="entry name" value="Ribosomal protein S10 domain"/>
    <property type="match status" value="1"/>
</dbReference>
<dbReference type="HAMAP" id="MF_00508">
    <property type="entry name" value="Ribosomal_uS10"/>
    <property type="match status" value="1"/>
</dbReference>
<dbReference type="InterPro" id="IPR001848">
    <property type="entry name" value="Ribosomal_uS10"/>
</dbReference>
<dbReference type="InterPro" id="IPR018268">
    <property type="entry name" value="Ribosomal_uS10_CS"/>
</dbReference>
<dbReference type="InterPro" id="IPR027486">
    <property type="entry name" value="Ribosomal_uS10_dom"/>
</dbReference>
<dbReference type="InterPro" id="IPR036838">
    <property type="entry name" value="Ribosomal_uS10_dom_sf"/>
</dbReference>
<dbReference type="NCBIfam" id="NF001861">
    <property type="entry name" value="PRK00596.1"/>
    <property type="match status" value="1"/>
</dbReference>
<dbReference type="NCBIfam" id="TIGR01049">
    <property type="entry name" value="rpsJ_bact"/>
    <property type="match status" value="1"/>
</dbReference>
<dbReference type="PANTHER" id="PTHR11700">
    <property type="entry name" value="30S RIBOSOMAL PROTEIN S10 FAMILY MEMBER"/>
    <property type="match status" value="1"/>
</dbReference>
<dbReference type="Pfam" id="PF00338">
    <property type="entry name" value="Ribosomal_S10"/>
    <property type="match status" value="1"/>
</dbReference>
<dbReference type="PRINTS" id="PR00971">
    <property type="entry name" value="RIBOSOMALS10"/>
</dbReference>
<dbReference type="SMART" id="SM01403">
    <property type="entry name" value="Ribosomal_S10"/>
    <property type="match status" value="1"/>
</dbReference>
<dbReference type="SUPFAM" id="SSF54999">
    <property type="entry name" value="Ribosomal protein S10"/>
    <property type="match status" value="1"/>
</dbReference>
<dbReference type="PROSITE" id="PS00361">
    <property type="entry name" value="RIBOSOMAL_S10"/>
    <property type="match status" value="1"/>
</dbReference>
<comment type="function">
    <text evidence="1">Involved in the binding of tRNA to the ribosomes.</text>
</comment>
<comment type="subunit">
    <text evidence="1">Part of the 30S ribosomal subunit.</text>
</comment>
<comment type="similarity">
    <text evidence="1">Belongs to the universal ribosomal protein uS10 family.</text>
</comment>
<sequence length="102" mass="11613">MANKKIRIRLKAYEHRTLDTAAEKIVETATRTGATVAGPVPLPTERSLYTIIRATHKYKDSREQFEMRTHKRLIDIVNPTQKTVDALMKLDLPSGVNVKIKL</sequence>
<protein>
    <recommendedName>
        <fullName evidence="1">Small ribosomal subunit protein uS10</fullName>
    </recommendedName>
    <alternativeName>
        <fullName evidence="2">30S ribosomal protein S10</fullName>
    </alternativeName>
</protein>
<gene>
    <name evidence="1" type="primary">rpsJ</name>
    <name type="ordered locus">Sez_0055</name>
</gene>
<reference key="1">
    <citation type="journal article" date="2008" name="PLoS ONE">
        <title>Genome sequence of a lancefield group C Streptococcus zooepidemicus strain causing epidemic nephritis: new information about an old disease.</title>
        <authorList>
            <person name="Beres S.B."/>
            <person name="Sesso R."/>
            <person name="Pinto S.W.L."/>
            <person name="Hoe N.P."/>
            <person name="Porcella S.F."/>
            <person name="Deleo F.R."/>
            <person name="Musser J.M."/>
        </authorList>
    </citation>
    <scope>NUCLEOTIDE SEQUENCE [LARGE SCALE GENOMIC DNA]</scope>
    <source>
        <strain>MGCS10565</strain>
    </source>
</reference>
<evidence type="ECO:0000255" key="1">
    <source>
        <dbReference type="HAMAP-Rule" id="MF_00508"/>
    </source>
</evidence>
<evidence type="ECO:0000305" key="2"/>
<proteinExistence type="inferred from homology"/>
<name>RS10_STREM</name>
<accession>B4U4Z9</accession>
<feature type="chain" id="PRO_1000127185" description="Small ribosomal subunit protein uS10">
    <location>
        <begin position="1"/>
        <end position="102"/>
    </location>
</feature>
<organism>
    <name type="scientific">Streptococcus equi subsp. zooepidemicus (strain MGCS10565)</name>
    <dbReference type="NCBI Taxonomy" id="552526"/>
    <lineage>
        <taxon>Bacteria</taxon>
        <taxon>Bacillati</taxon>
        <taxon>Bacillota</taxon>
        <taxon>Bacilli</taxon>
        <taxon>Lactobacillales</taxon>
        <taxon>Streptococcaceae</taxon>
        <taxon>Streptococcus</taxon>
    </lineage>
</organism>
<keyword id="KW-0687">Ribonucleoprotein</keyword>
<keyword id="KW-0689">Ribosomal protein</keyword>